<reference key="1">
    <citation type="journal article" date="2006" name="Proc. Natl. Acad. Sci. U.S.A.">
        <title>Multireplicon genome architecture of Lactobacillus salivarius.</title>
        <authorList>
            <person name="Claesson M.J."/>
            <person name="Li Y."/>
            <person name="Leahy S."/>
            <person name="Canchaya C."/>
            <person name="van Pijkeren J.P."/>
            <person name="Cerdeno-Tarraga A.M."/>
            <person name="Parkhill J."/>
            <person name="Flynn S."/>
            <person name="O'Sullivan G.C."/>
            <person name="Collins J.K."/>
            <person name="Higgins D."/>
            <person name="Shanahan F."/>
            <person name="Fitzgerald G.F."/>
            <person name="van Sinderen D."/>
            <person name="O'Toole P.W."/>
        </authorList>
    </citation>
    <scope>NUCLEOTIDE SEQUENCE [LARGE SCALE GENOMIC DNA]</scope>
    <source>
        <strain>UCC118</strain>
    </source>
</reference>
<protein>
    <recommendedName>
        <fullName evidence="1">Energy-coupling factor transporter ATP-binding protein EcfA1</fullName>
        <shortName evidence="1">ECF transporter A component EcfA1</shortName>
        <ecNumber evidence="1">7.-.-.-</ecNumber>
    </recommendedName>
</protein>
<evidence type="ECO:0000255" key="1">
    <source>
        <dbReference type="HAMAP-Rule" id="MF_01710"/>
    </source>
</evidence>
<keyword id="KW-0067">ATP-binding</keyword>
<keyword id="KW-1003">Cell membrane</keyword>
<keyword id="KW-0472">Membrane</keyword>
<keyword id="KW-0547">Nucleotide-binding</keyword>
<keyword id="KW-1185">Reference proteome</keyword>
<keyword id="KW-1278">Translocase</keyword>
<keyword id="KW-0813">Transport</keyword>
<proteinExistence type="inferred from homology"/>
<organism>
    <name type="scientific">Ligilactobacillus salivarius (strain UCC118)</name>
    <name type="common">Lactobacillus salivarius</name>
    <dbReference type="NCBI Taxonomy" id="362948"/>
    <lineage>
        <taxon>Bacteria</taxon>
        <taxon>Bacillati</taxon>
        <taxon>Bacillota</taxon>
        <taxon>Bacilli</taxon>
        <taxon>Lactobacillales</taxon>
        <taxon>Lactobacillaceae</taxon>
        <taxon>Ligilactobacillus</taxon>
    </lineage>
</organism>
<name>ECFA1_LIGS1</name>
<accession>Q1WSB8</accession>
<dbReference type="EC" id="7.-.-.-" evidence="1"/>
<dbReference type="EMBL" id="CP000233">
    <property type="protein sequence ID" value="ABE00211.1"/>
    <property type="molecule type" value="Genomic_DNA"/>
</dbReference>
<dbReference type="RefSeq" id="WP_011476335.1">
    <property type="nucleotide sequence ID" value="NC_007929.1"/>
</dbReference>
<dbReference type="RefSeq" id="YP_536294.1">
    <property type="nucleotide sequence ID" value="NC_007929.1"/>
</dbReference>
<dbReference type="SMR" id="Q1WSB8"/>
<dbReference type="STRING" id="362948.LSL_1407"/>
<dbReference type="KEGG" id="lsl:LSL_1407"/>
<dbReference type="PATRIC" id="fig|362948.14.peg.1490"/>
<dbReference type="HOGENOM" id="CLU_000604_1_22_9"/>
<dbReference type="OrthoDB" id="9784332at2"/>
<dbReference type="Proteomes" id="UP000006559">
    <property type="component" value="Chromosome"/>
</dbReference>
<dbReference type="GO" id="GO:0043190">
    <property type="term" value="C:ATP-binding cassette (ABC) transporter complex"/>
    <property type="evidence" value="ECO:0007669"/>
    <property type="project" value="TreeGrafter"/>
</dbReference>
<dbReference type="GO" id="GO:0005524">
    <property type="term" value="F:ATP binding"/>
    <property type="evidence" value="ECO:0007669"/>
    <property type="project" value="UniProtKB-KW"/>
</dbReference>
<dbReference type="GO" id="GO:0016887">
    <property type="term" value="F:ATP hydrolysis activity"/>
    <property type="evidence" value="ECO:0007669"/>
    <property type="project" value="InterPro"/>
</dbReference>
<dbReference type="GO" id="GO:0042626">
    <property type="term" value="F:ATPase-coupled transmembrane transporter activity"/>
    <property type="evidence" value="ECO:0007669"/>
    <property type="project" value="TreeGrafter"/>
</dbReference>
<dbReference type="CDD" id="cd03225">
    <property type="entry name" value="ABC_cobalt_CbiO_domain1"/>
    <property type="match status" value="1"/>
</dbReference>
<dbReference type="FunFam" id="3.40.50.300:FF:000224">
    <property type="entry name" value="Energy-coupling factor transporter ATP-binding protein EcfA"/>
    <property type="match status" value="1"/>
</dbReference>
<dbReference type="Gene3D" id="3.40.50.300">
    <property type="entry name" value="P-loop containing nucleotide triphosphate hydrolases"/>
    <property type="match status" value="1"/>
</dbReference>
<dbReference type="InterPro" id="IPR003593">
    <property type="entry name" value="AAA+_ATPase"/>
</dbReference>
<dbReference type="InterPro" id="IPR003439">
    <property type="entry name" value="ABC_transporter-like_ATP-bd"/>
</dbReference>
<dbReference type="InterPro" id="IPR017871">
    <property type="entry name" value="ABC_transporter-like_CS"/>
</dbReference>
<dbReference type="InterPro" id="IPR015856">
    <property type="entry name" value="ABC_transpr_CbiO/EcfA_su"/>
</dbReference>
<dbReference type="InterPro" id="IPR050095">
    <property type="entry name" value="ECF_ABC_transporter_ATP-bd"/>
</dbReference>
<dbReference type="InterPro" id="IPR030947">
    <property type="entry name" value="EcfA_1"/>
</dbReference>
<dbReference type="InterPro" id="IPR027417">
    <property type="entry name" value="P-loop_NTPase"/>
</dbReference>
<dbReference type="NCBIfam" id="TIGR04520">
    <property type="entry name" value="ECF_ATPase_1"/>
    <property type="match status" value="1"/>
</dbReference>
<dbReference type="NCBIfam" id="NF010156">
    <property type="entry name" value="PRK13635.1"/>
    <property type="match status" value="1"/>
</dbReference>
<dbReference type="NCBIfam" id="NF010167">
    <property type="entry name" value="PRK13648.1"/>
    <property type="match status" value="1"/>
</dbReference>
<dbReference type="PANTHER" id="PTHR43553:SF24">
    <property type="entry name" value="ENERGY-COUPLING FACTOR TRANSPORTER ATP-BINDING PROTEIN ECFA1"/>
    <property type="match status" value="1"/>
</dbReference>
<dbReference type="PANTHER" id="PTHR43553">
    <property type="entry name" value="HEAVY METAL TRANSPORTER"/>
    <property type="match status" value="1"/>
</dbReference>
<dbReference type="Pfam" id="PF00005">
    <property type="entry name" value="ABC_tran"/>
    <property type="match status" value="1"/>
</dbReference>
<dbReference type="SMART" id="SM00382">
    <property type="entry name" value="AAA"/>
    <property type="match status" value="1"/>
</dbReference>
<dbReference type="SUPFAM" id="SSF52540">
    <property type="entry name" value="P-loop containing nucleoside triphosphate hydrolases"/>
    <property type="match status" value="1"/>
</dbReference>
<dbReference type="PROSITE" id="PS00211">
    <property type="entry name" value="ABC_TRANSPORTER_1"/>
    <property type="match status" value="1"/>
</dbReference>
<dbReference type="PROSITE" id="PS50893">
    <property type="entry name" value="ABC_TRANSPORTER_2"/>
    <property type="match status" value="1"/>
</dbReference>
<dbReference type="PROSITE" id="PS51246">
    <property type="entry name" value="CBIO"/>
    <property type="match status" value="1"/>
</dbReference>
<feature type="chain" id="PRO_0000287956" description="Energy-coupling factor transporter ATP-binding protein EcfA1">
    <location>
        <begin position="1"/>
        <end position="282"/>
    </location>
</feature>
<feature type="domain" description="ABC transporter" evidence="1">
    <location>
        <begin position="9"/>
        <end position="243"/>
    </location>
</feature>
<feature type="binding site" evidence="1">
    <location>
        <begin position="43"/>
        <end position="50"/>
    </location>
    <ligand>
        <name>ATP</name>
        <dbReference type="ChEBI" id="CHEBI:30616"/>
    </ligand>
</feature>
<sequence length="282" mass="31572">MSLTDGNIIEIDNLSFKYARQNKCILKNLTLNIKDGQWIALIGHNGSGKSTLARLIDGLLKAESGSIKVDGYEMNEKNIWDIRKKIGMVFQNPDNQFVGADVESDIAFGLENQGVPREEMVSRVADALKVVGMEKFATHEPARLSGGQKQRVAIAGVLALRPKIIILDEATSMLDPEGRKGLITLIKDLKDEYKFTVISITHDIDEATLADRVIVLDDGKIIDDGKPESIFIKNDELLNIGLDIPFAEKIRRELTKKGVDIPNKYFTEEEMVDWLCQFKQKN</sequence>
<gene>
    <name evidence="1" type="primary">ecfA1</name>
    <name type="synonym">cbiO1</name>
    <name type="ordered locus">LSL_1407</name>
</gene>
<comment type="function">
    <text evidence="1">ATP-binding (A) component of a common energy-coupling factor (ECF) ABC-transporter complex. Unlike classic ABC transporters this ECF transporter provides the energy necessary to transport a number of different substrates.</text>
</comment>
<comment type="subunit">
    <text evidence="1">Forms a stable energy-coupling factor (ECF) transporter complex composed of 2 membrane-embedded substrate-binding proteins (S component), 2 ATP-binding proteins (A component) and 2 transmembrane proteins (T component).</text>
</comment>
<comment type="subcellular location">
    <subcellularLocation>
        <location evidence="1">Cell membrane</location>
        <topology evidence="1">Peripheral membrane protein</topology>
    </subcellularLocation>
</comment>
<comment type="similarity">
    <text evidence="1">Belongs to the ABC transporter superfamily. Energy-coupling factor EcfA family.</text>
</comment>